<protein>
    <recommendedName>
        <fullName evidence="1">NADH-quinone oxidoreductase subunit K</fullName>
        <ecNumber evidence="1">7.1.1.-</ecNumber>
    </recommendedName>
    <alternativeName>
        <fullName evidence="1">NADH dehydrogenase I subunit K</fullName>
    </alternativeName>
    <alternativeName>
        <fullName evidence="1">NDH-1 subunit K</fullName>
    </alternativeName>
</protein>
<accession>Q20Z48</accession>
<organism>
    <name type="scientific">Rhodopseudomonas palustris (strain BisB18)</name>
    <dbReference type="NCBI Taxonomy" id="316056"/>
    <lineage>
        <taxon>Bacteria</taxon>
        <taxon>Pseudomonadati</taxon>
        <taxon>Pseudomonadota</taxon>
        <taxon>Alphaproteobacteria</taxon>
        <taxon>Hyphomicrobiales</taxon>
        <taxon>Nitrobacteraceae</taxon>
        <taxon>Rhodopseudomonas</taxon>
    </lineage>
</organism>
<gene>
    <name evidence="1" type="primary">nuoK</name>
    <name type="ordered locus">RPC_4062</name>
</gene>
<dbReference type="EC" id="7.1.1.-" evidence="1"/>
<dbReference type="EMBL" id="CP000301">
    <property type="protein sequence ID" value="ABD89588.1"/>
    <property type="molecule type" value="Genomic_DNA"/>
</dbReference>
<dbReference type="SMR" id="Q20Z48"/>
<dbReference type="STRING" id="316056.RPC_4062"/>
<dbReference type="KEGG" id="rpc:RPC_4062"/>
<dbReference type="eggNOG" id="COG0713">
    <property type="taxonomic scope" value="Bacteria"/>
</dbReference>
<dbReference type="HOGENOM" id="CLU_144724_0_1_5"/>
<dbReference type="OrthoDB" id="9810120at2"/>
<dbReference type="GO" id="GO:0030964">
    <property type="term" value="C:NADH dehydrogenase complex"/>
    <property type="evidence" value="ECO:0007669"/>
    <property type="project" value="TreeGrafter"/>
</dbReference>
<dbReference type="GO" id="GO:0005886">
    <property type="term" value="C:plasma membrane"/>
    <property type="evidence" value="ECO:0007669"/>
    <property type="project" value="UniProtKB-SubCell"/>
</dbReference>
<dbReference type="GO" id="GO:0050136">
    <property type="term" value="F:NADH:ubiquinone reductase (non-electrogenic) activity"/>
    <property type="evidence" value="ECO:0007669"/>
    <property type="project" value="UniProtKB-UniRule"/>
</dbReference>
<dbReference type="GO" id="GO:0048038">
    <property type="term" value="F:quinone binding"/>
    <property type="evidence" value="ECO:0007669"/>
    <property type="project" value="UniProtKB-KW"/>
</dbReference>
<dbReference type="GO" id="GO:0042773">
    <property type="term" value="P:ATP synthesis coupled electron transport"/>
    <property type="evidence" value="ECO:0007669"/>
    <property type="project" value="InterPro"/>
</dbReference>
<dbReference type="Gene3D" id="1.10.287.3510">
    <property type="match status" value="1"/>
</dbReference>
<dbReference type="HAMAP" id="MF_01456">
    <property type="entry name" value="NDH1_NuoK"/>
    <property type="match status" value="1"/>
</dbReference>
<dbReference type="InterPro" id="IPR001133">
    <property type="entry name" value="NADH_UbQ_OxRdtase_chain4L/K"/>
</dbReference>
<dbReference type="InterPro" id="IPR039428">
    <property type="entry name" value="NUOK/Mnh_C1-like"/>
</dbReference>
<dbReference type="NCBIfam" id="NF004320">
    <property type="entry name" value="PRK05715.1-2"/>
    <property type="match status" value="1"/>
</dbReference>
<dbReference type="PANTHER" id="PTHR11434:SF16">
    <property type="entry name" value="NADH-UBIQUINONE OXIDOREDUCTASE CHAIN 4L"/>
    <property type="match status" value="1"/>
</dbReference>
<dbReference type="PANTHER" id="PTHR11434">
    <property type="entry name" value="NADH-UBIQUINONE OXIDOREDUCTASE SUBUNIT ND4L"/>
    <property type="match status" value="1"/>
</dbReference>
<dbReference type="Pfam" id="PF00420">
    <property type="entry name" value="Oxidored_q2"/>
    <property type="match status" value="1"/>
</dbReference>
<comment type="function">
    <text evidence="1">NDH-1 shuttles electrons from NADH, via FMN and iron-sulfur (Fe-S) centers, to quinones in the respiratory chain. The immediate electron acceptor for the enzyme in this species is believed to be ubiquinone. Couples the redox reaction to proton translocation (for every two electrons transferred, four hydrogen ions are translocated across the cytoplasmic membrane), and thus conserves the redox energy in a proton gradient.</text>
</comment>
<comment type="catalytic activity">
    <reaction evidence="1">
        <text>a quinone + NADH + 5 H(+)(in) = a quinol + NAD(+) + 4 H(+)(out)</text>
        <dbReference type="Rhea" id="RHEA:57888"/>
        <dbReference type="ChEBI" id="CHEBI:15378"/>
        <dbReference type="ChEBI" id="CHEBI:24646"/>
        <dbReference type="ChEBI" id="CHEBI:57540"/>
        <dbReference type="ChEBI" id="CHEBI:57945"/>
        <dbReference type="ChEBI" id="CHEBI:132124"/>
    </reaction>
</comment>
<comment type="subunit">
    <text evidence="1">NDH-1 is composed of 14 different subunits. Subunits NuoA, H, J, K, L, M, N constitute the membrane sector of the complex.</text>
</comment>
<comment type="subcellular location">
    <subcellularLocation>
        <location evidence="1">Cell inner membrane</location>
        <topology evidence="1">Multi-pass membrane protein</topology>
    </subcellularLocation>
</comment>
<comment type="similarity">
    <text evidence="1">Belongs to the complex I subunit 4L family.</text>
</comment>
<feature type="chain" id="PRO_5000114029" description="NADH-quinone oxidoreductase subunit K">
    <location>
        <begin position="1"/>
        <end position="102"/>
    </location>
</feature>
<feature type="transmembrane region" description="Helical" evidence="1">
    <location>
        <begin position="5"/>
        <end position="25"/>
    </location>
</feature>
<feature type="transmembrane region" description="Helical" evidence="1">
    <location>
        <begin position="30"/>
        <end position="50"/>
    </location>
</feature>
<feature type="transmembrane region" description="Helical" evidence="1">
    <location>
        <begin position="63"/>
        <end position="83"/>
    </location>
</feature>
<reference key="1">
    <citation type="submission" date="2006-03" db="EMBL/GenBank/DDBJ databases">
        <title>Complete sequence of Rhodopseudomonas palustris BisB18.</title>
        <authorList>
            <consortium name="US DOE Joint Genome Institute"/>
            <person name="Copeland A."/>
            <person name="Lucas S."/>
            <person name="Lapidus A."/>
            <person name="Barry K."/>
            <person name="Detter J.C."/>
            <person name="Glavina del Rio T."/>
            <person name="Hammon N."/>
            <person name="Israni S."/>
            <person name="Dalin E."/>
            <person name="Tice H."/>
            <person name="Pitluck S."/>
            <person name="Chain P."/>
            <person name="Malfatti S."/>
            <person name="Shin M."/>
            <person name="Vergez L."/>
            <person name="Schmutz J."/>
            <person name="Larimer F."/>
            <person name="Land M."/>
            <person name="Hauser L."/>
            <person name="Pelletier D.A."/>
            <person name="Kyrpides N."/>
            <person name="Anderson I."/>
            <person name="Oda Y."/>
            <person name="Harwood C.S."/>
            <person name="Richardson P."/>
        </authorList>
    </citation>
    <scope>NUCLEOTIDE SEQUENCE [LARGE SCALE GENOMIC DNA]</scope>
    <source>
        <strain>BisB18</strain>
    </source>
</reference>
<proteinExistence type="inferred from homology"/>
<name>NUOK_RHOPB</name>
<sequence>MTGTALTGMMIVAAGLFAAGVFGVLARRGILFQLISLEVALSGPALAFIAAGAYHGDAEGQGMFVLVLTLAAAEVAVGLALFLRIRRSKGSDDSDAVSGLKG</sequence>
<keyword id="KW-0997">Cell inner membrane</keyword>
<keyword id="KW-1003">Cell membrane</keyword>
<keyword id="KW-0472">Membrane</keyword>
<keyword id="KW-0520">NAD</keyword>
<keyword id="KW-0874">Quinone</keyword>
<keyword id="KW-1278">Translocase</keyword>
<keyword id="KW-0812">Transmembrane</keyword>
<keyword id="KW-1133">Transmembrane helix</keyword>
<keyword id="KW-0813">Transport</keyword>
<keyword id="KW-0830">Ubiquinone</keyword>
<evidence type="ECO:0000255" key="1">
    <source>
        <dbReference type="HAMAP-Rule" id="MF_01456"/>
    </source>
</evidence>